<reference key="1">
    <citation type="journal article" date="2000" name="Nature">
        <title>Complete genome sequence of Pseudomonas aeruginosa PAO1, an opportunistic pathogen.</title>
        <authorList>
            <person name="Stover C.K."/>
            <person name="Pham X.-Q.T."/>
            <person name="Erwin A.L."/>
            <person name="Mizoguchi S.D."/>
            <person name="Warrener P."/>
            <person name="Hickey M.J."/>
            <person name="Brinkman F.S.L."/>
            <person name="Hufnagle W.O."/>
            <person name="Kowalik D.J."/>
            <person name="Lagrou M."/>
            <person name="Garber R.L."/>
            <person name="Goltry L."/>
            <person name="Tolentino E."/>
            <person name="Westbrock-Wadman S."/>
            <person name="Yuan Y."/>
            <person name="Brody L.L."/>
            <person name="Coulter S.N."/>
            <person name="Folger K.R."/>
            <person name="Kas A."/>
            <person name="Larbig K."/>
            <person name="Lim R.M."/>
            <person name="Smith K.A."/>
            <person name="Spencer D.H."/>
            <person name="Wong G.K.-S."/>
            <person name="Wu Z."/>
            <person name="Paulsen I.T."/>
            <person name="Reizer J."/>
            <person name="Saier M.H. Jr."/>
            <person name="Hancock R.E.W."/>
            <person name="Lory S."/>
            <person name="Olson M.V."/>
        </authorList>
    </citation>
    <scope>NUCLEOTIDE SEQUENCE [LARGE SCALE GENOMIC DNA]</scope>
    <source>
        <strain>ATCC 15692 / DSM 22644 / CIP 104116 / JCM 14847 / LMG 12228 / 1C / PRS 101 / PAO1</strain>
    </source>
</reference>
<gene>
    <name evidence="1" type="primary">ilvD</name>
    <name type="ordered locus">PA0353</name>
</gene>
<feature type="chain" id="PRO_0000103492" description="Dihydroxy-acid dehydratase">
    <location>
        <begin position="1"/>
        <end position="612"/>
    </location>
</feature>
<feature type="active site" description="Proton acceptor" evidence="1">
    <location>
        <position position="515"/>
    </location>
</feature>
<feature type="binding site" evidence="1">
    <location>
        <position position="81"/>
    </location>
    <ligand>
        <name>Mg(2+)</name>
        <dbReference type="ChEBI" id="CHEBI:18420"/>
    </ligand>
</feature>
<feature type="binding site" evidence="1">
    <location>
        <position position="122"/>
    </location>
    <ligand>
        <name>[2Fe-2S] cluster</name>
        <dbReference type="ChEBI" id="CHEBI:190135"/>
    </ligand>
</feature>
<feature type="binding site" evidence="1">
    <location>
        <position position="123"/>
    </location>
    <ligand>
        <name>Mg(2+)</name>
        <dbReference type="ChEBI" id="CHEBI:18420"/>
    </ligand>
</feature>
<feature type="binding site" description="via carbamate group" evidence="1">
    <location>
        <position position="124"/>
    </location>
    <ligand>
        <name>Mg(2+)</name>
        <dbReference type="ChEBI" id="CHEBI:18420"/>
    </ligand>
</feature>
<feature type="binding site" evidence="1">
    <location>
        <position position="193"/>
    </location>
    <ligand>
        <name>[2Fe-2S] cluster</name>
        <dbReference type="ChEBI" id="CHEBI:190135"/>
    </ligand>
</feature>
<feature type="binding site" evidence="1">
    <location>
        <position position="489"/>
    </location>
    <ligand>
        <name>Mg(2+)</name>
        <dbReference type="ChEBI" id="CHEBI:18420"/>
    </ligand>
</feature>
<feature type="modified residue" description="N6-carboxylysine" evidence="1">
    <location>
        <position position="124"/>
    </location>
</feature>
<organism>
    <name type="scientific">Pseudomonas aeruginosa (strain ATCC 15692 / DSM 22644 / CIP 104116 / JCM 14847 / LMG 12228 / 1C / PRS 101 / PAO1)</name>
    <dbReference type="NCBI Taxonomy" id="208964"/>
    <lineage>
        <taxon>Bacteria</taxon>
        <taxon>Pseudomonadati</taxon>
        <taxon>Pseudomonadota</taxon>
        <taxon>Gammaproteobacteria</taxon>
        <taxon>Pseudomonadales</taxon>
        <taxon>Pseudomonadaceae</taxon>
        <taxon>Pseudomonas</taxon>
    </lineage>
</organism>
<keyword id="KW-0001">2Fe-2S</keyword>
<keyword id="KW-0028">Amino-acid biosynthesis</keyword>
<keyword id="KW-0100">Branched-chain amino acid biosynthesis</keyword>
<keyword id="KW-0408">Iron</keyword>
<keyword id="KW-0411">Iron-sulfur</keyword>
<keyword id="KW-0456">Lyase</keyword>
<keyword id="KW-0460">Magnesium</keyword>
<keyword id="KW-0479">Metal-binding</keyword>
<keyword id="KW-1185">Reference proteome</keyword>
<proteinExistence type="inferred from homology"/>
<evidence type="ECO:0000255" key="1">
    <source>
        <dbReference type="HAMAP-Rule" id="MF_00012"/>
    </source>
</evidence>
<comment type="function">
    <text evidence="1">Functions in the biosynthesis of branched-chain amino acids. Catalyzes the dehydration of (2R,3R)-2,3-dihydroxy-3-methylpentanoate (2,3-dihydroxy-3-methylvalerate) into 2-oxo-3-methylpentanoate (2-oxo-3-methylvalerate) and of (2R)-2,3-dihydroxy-3-methylbutanoate (2,3-dihydroxyisovalerate) into 2-oxo-3-methylbutanoate (2-oxoisovalerate), the penultimate precursor to L-isoleucine and L-valine, respectively.</text>
</comment>
<comment type="catalytic activity">
    <reaction evidence="1">
        <text>(2R)-2,3-dihydroxy-3-methylbutanoate = 3-methyl-2-oxobutanoate + H2O</text>
        <dbReference type="Rhea" id="RHEA:24809"/>
        <dbReference type="ChEBI" id="CHEBI:11851"/>
        <dbReference type="ChEBI" id="CHEBI:15377"/>
        <dbReference type="ChEBI" id="CHEBI:49072"/>
        <dbReference type="EC" id="4.2.1.9"/>
    </reaction>
    <physiologicalReaction direction="left-to-right" evidence="1">
        <dbReference type="Rhea" id="RHEA:24810"/>
    </physiologicalReaction>
</comment>
<comment type="catalytic activity">
    <reaction evidence="1">
        <text>(2R,3R)-2,3-dihydroxy-3-methylpentanoate = (S)-3-methyl-2-oxopentanoate + H2O</text>
        <dbReference type="Rhea" id="RHEA:27694"/>
        <dbReference type="ChEBI" id="CHEBI:15377"/>
        <dbReference type="ChEBI" id="CHEBI:35146"/>
        <dbReference type="ChEBI" id="CHEBI:49258"/>
        <dbReference type="EC" id="4.2.1.9"/>
    </reaction>
    <physiologicalReaction direction="left-to-right" evidence="1">
        <dbReference type="Rhea" id="RHEA:27695"/>
    </physiologicalReaction>
</comment>
<comment type="cofactor">
    <cofactor evidence="1">
        <name>[2Fe-2S] cluster</name>
        <dbReference type="ChEBI" id="CHEBI:190135"/>
    </cofactor>
    <text evidence="1">Binds 1 [2Fe-2S] cluster per subunit. This cluster acts as a Lewis acid cofactor.</text>
</comment>
<comment type="cofactor">
    <cofactor evidence="1">
        <name>Mg(2+)</name>
        <dbReference type="ChEBI" id="CHEBI:18420"/>
    </cofactor>
</comment>
<comment type="pathway">
    <text evidence="1">Amino-acid biosynthesis; L-isoleucine biosynthesis; L-isoleucine from 2-oxobutanoate: step 3/4.</text>
</comment>
<comment type="pathway">
    <text evidence="1">Amino-acid biosynthesis; L-valine biosynthesis; L-valine from pyruvate: step 3/4.</text>
</comment>
<comment type="subunit">
    <text evidence="1">Homodimer.</text>
</comment>
<comment type="similarity">
    <text evidence="1">Belongs to the IlvD/Edd family.</text>
</comment>
<name>ILVD_PSEAE</name>
<dbReference type="EC" id="4.2.1.9" evidence="1"/>
<dbReference type="EMBL" id="AE004091">
    <property type="protein sequence ID" value="AAG03742.1"/>
    <property type="molecule type" value="Genomic_DNA"/>
</dbReference>
<dbReference type="PIR" id="C83601">
    <property type="entry name" value="C83601"/>
</dbReference>
<dbReference type="RefSeq" id="NP_249044.1">
    <property type="nucleotide sequence ID" value="NC_002516.2"/>
</dbReference>
<dbReference type="RefSeq" id="WP_003084436.1">
    <property type="nucleotide sequence ID" value="NZ_QZGE01000016.1"/>
</dbReference>
<dbReference type="SMR" id="Q9I6E0"/>
<dbReference type="FunCoup" id="Q9I6E0">
    <property type="interactions" value="622"/>
</dbReference>
<dbReference type="STRING" id="208964.PA0353"/>
<dbReference type="PaxDb" id="208964-PA0353"/>
<dbReference type="DNASU" id="879274"/>
<dbReference type="GeneID" id="879274"/>
<dbReference type="KEGG" id="pae:PA0353"/>
<dbReference type="PATRIC" id="fig|208964.12.peg.371"/>
<dbReference type="PseudoCAP" id="PA0353"/>
<dbReference type="HOGENOM" id="CLU_014271_4_2_6"/>
<dbReference type="InParanoid" id="Q9I6E0"/>
<dbReference type="OrthoDB" id="9807077at2"/>
<dbReference type="PhylomeDB" id="Q9I6E0"/>
<dbReference type="BioCyc" id="PAER208964:G1FZ6-356-MONOMER"/>
<dbReference type="UniPathway" id="UPA00047">
    <property type="reaction ID" value="UER00057"/>
</dbReference>
<dbReference type="UniPathway" id="UPA00049">
    <property type="reaction ID" value="UER00061"/>
</dbReference>
<dbReference type="Proteomes" id="UP000002438">
    <property type="component" value="Chromosome"/>
</dbReference>
<dbReference type="GO" id="GO:0005829">
    <property type="term" value="C:cytosol"/>
    <property type="evidence" value="ECO:0000318"/>
    <property type="project" value="GO_Central"/>
</dbReference>
<dbReference type="GO" id="GO:0051537">
    <property type="term" value="F:2 iron, 2 sulfur cluster binding"/>
    <property type="evidence" value="ECO:0007669"/>
    <property type="project" value="UniProtKB-UniRule"/>
</dbReference>
<dbReference type="GO" id="GO:0004160">
    <property type="term" value="F:dihydroxy-acid dehydratase activity"/>
    <property type="evidence" value="ECO:0007669"/>
    <property type="project" value="UniProtKB-UniRule"/>
</dbReference>
<dbReference type="GO" id="GO:0016836">
    <property type="term" value="F:hydro-lyase activity"/>
    <property type="evidence" value="ECO:0000318"/>
    <property type="project" value="GO_Central"/>
</dbReference>
<dbReference type="GO" id="GO:0000287">
    <property type="term" value="F:magnesium ion binding"/>
    <property type="evidence" value="ECO:0007669"/>
    <property type="project" value="UniProtKB-UniRule"/>
</dbReference>
<dbReference type="GO" id="GO:0009097">
    <property type="term" value="P:isoleucine biosynthetic process"/>
    <property type="evidence" value="ECO:0007669"/>
    <property type="project" value="UniProtKB-UniRule"/>
</dbReference>
<dbReference type="GO" id="GO:0009099">
    <property type="term" value="P:L-valine biosynthetic process"/>
    <property type="evidence" value="ECO:0007669"/>
    <property type="project" value="UniProtKB-UniRule"/>
</dbReference>
<dbReference type="FunFam" id="3.50.30.80:FF:000001">
    <property type="entry name" value="Dihydroxy-acid dehydratase"/>
    <property type="match status" value="1"/>
</dbReference>
<dbReference type="Gene3D" id="3.50.30.80">
    <property type="entry name" value="IlvD/EDD C-terminal domain-like"/>
    <property type="match status" value="1"/>
</dbReference>
<dbReference type="HAMAP" id="MF_00012">
    <property type="entry name" value="IlvD"/>
    <property type="match status" value="1"/>
</dbReference>
<dbReference type="InterPro" id="IPR042096">
    <property type="entry name" value="Dihydro-acid_dehy_C"/>
</dbReference>
<dbReference type="InterPro" id="IPR004404">
    <property type="entry name" value="DihydroxyA_deHydtase"/>
</dbReference>
<dbReference type="InterPro" id="IPR020558">
    <property type="entry name" value="DiOHA_6PGluconate_deHydtase_CS"/>
</dbReference>
<dbReference type="InterPro" id="IPR056740">
    <property type="entry name" value="ILV_EDD_C"/>
</dbReference>
<dbReference type="InterPro" id="IPR000581">
    <property type="entry name" value="ILV_EDD_N"/>
</dbReference>
<dbReference type="InterPro" id="IPR037237">
    <property type="entry name" value="IlvD/EDD_N"/>
</dbReference>
<dbReference type="NCBIfam" id="TIGR00110">
    <property type="entry name" value="ilvD"/>
    <property type="match status" value="1"/>
</dbReference>
<dbReference type="NCBIfam" id="NF009103">
    <property type="entry name" value="PRK12448.1"/>
    <property type="match status" value="1"/>
</dbReference>
<dbReference type="PANTHER" id="PTHR43661">
    <property type="entry name" value="D-XYLONATE DEHYDRATASE"/>
    <property type="match status" value="1"/>
</dbReference>
<dbReference type="PANTHER" id="PTHR43661:SF3">
    <property type="entry name" value="D-XYLONATE DEHYDRATASE YAGF-RELATED"/>
    <property type="match status" value="1"/>
</dbReference>
<dbReference type="Pfam" id="PF24877">
    <property type="entry name" value="ILV_EDD_C"/>
    <property type="match status" value="1"/>
</dbReference>
<dbReference type="Pfam" id="PF00920">
    <property type="entry name" value="ILVD_EDD_N"/>
    <property type="match status" value="1"/>
</dbReference>
<dbReference type="SUPFAM" id="SSF143975">
    <property type="entry name" value="IlvD/EDD N-terminal domain-like"/>
    <property type="match status" value="1"/>
</dbReference>
<dbReference type="SUPFAM" id="SSF52016">
    <property type="entry name" value="LeuD/IlvD-like"/>
    <property type="match status" value="1"/>
</dbReference>
<dbReference type="PROSITE" id="PS00886">
    <property type="entry name" value="ILVD_EDD_1"/>
    <property type="match status" value="1"/>
</dbReference>
<dbReference type="PROSITE" id="PS00887">
    <property type="entry name" value="ILVD_EDD_2"/>
    <property type="match status" value="1"/>
</dbReference>
<sequence length="612" mass="65160">MPDYRSKTSTHGRNMAGARALWRATGMKDEDFKKPIIAIANSFTQFVPGHVHLKDLGQLVAREIEKAGGVAKEFNTIAVDDGIAMGHDGMLYSLPSREIIADSVEYMVNAHCADAIVCISNCDKITPGMLMAALRLNIPVVFVSGGPMEAGKTKLASHGLDLVDAMVVAADDSCSDEKVAEYERSACPTCGSCSGMFTANSMNCLTEALGLSLPGNGSTLATHADREQLFLRAGRLAVELCQRYYGEGDDSVLPRNIANFKAFENAMTLDIAMGGSTNTILHLLAAAQEAEVPFDLRDIDRLSRKVPQLCKVAPNIQKYHMEDVHRAGGIFSILGELARGGLLHTDVPTVHSPSMADAIAQWDITQTRDEAVHTFFKAGPAGIPTQTAFSQNTRWPSLDDDRAEGCIRSVEHAYSKEGGLAVLYGNIALDGCVVKTAGVDESIHVFEGSAKIFESQDAAVKGILGDEVKAGDIVIIRYEGPKGGPGMQEMLYPTSYLKSKGLGKQCALLTDGRFSGGTSGLSIGHASPEAAAGGAIGLVQDGDKVLIDIPNRSINLLVSDEELAARRAEQDKKGWKPAAPRARRVSTALKAYALLATSADKGAVRNKALLDG</sequence>
<accession>Q9I6E0</accession>
<protein>
    <recommendedName>
        <fullName evidence="1">Dihydroxy-acid dehydratase</fullName>
        <shortName evidence="1">DAD</shortName>
        <ecNumber evidence="1">4.2.1.9</ecNumber>
    </recommendedName>
</protein>